<organism>
    <name type="scientific">Bos taurus</name>
    <name type="common">Bovine</name>
    <dbReference type="NCBI Taxonomy" id="9913"/>
    <lineage>
        <taxon>Eukaryota</taxon>
        <taxon>Metazoa</taxon>
        <taxon>Chordata</taxon>
        <taxon>Craniata</taxon>
        <taxon>Vertebrata</taxon>
        <taxon>Euteleostomi</taxon>
        <taxon>Mammalia</taxon>
        <taxon>Eutheria</taxon>
        <taxon>Laurasiatheria</taxon>
        <taxon>Artiodactyla</taxon>
        <taxon>Ruminantia</taxon>
        <taxon>Pecora</taxon>
        <taxon>Bovidae</taxon>
        <taxon>Bovinae</taxon>
        <taxon>Bos</taxon>
    </lineage>
</organism>
<reference key="1">
    <citation type="submission" date="1999-07" db="EMBL/GenBank/DDBJ databases">
        <title>Bovine enamel ameloblastin sequence.</title>
        <authorList>
            <person name="Machule D."/>
            <person name="Li W."/>
            <person name="DenBesten P."/>
        </authorList>
    </citation>
    <scope>NUCLEOTIDE SEQUENCE [MRNA]</scope>
    <source>
        <tissue>Tooth enamel</tissue>
    </source>
</reference>
<proteinExistence type="evidence at transcript level"/>
<sequence length="392" mass="42239">MPALKIPLFKMKDMILILCLLKMSSAVPAFPQQPGIPGMASLSLETMRQLGSLQGLNLLSQYSRFGFGKSFNSLWMNGLLPPHSSFPWMRPREHETQQPSLQPQQPGQKPFLQPTVVTSMQNAVQKGVPQPPIYQGHPPLQQAEGPMVEQQVAPSEKPPTTELPGMDFADLQDPPMFPIAHLISRGPMPQNKPSQLYPGIFYVTYGANQLGGRGDPLAYGAIFPGFGGMRPRLGGMPHNPDMGGDFTLEFDSPVAATKGPEKGEGGAQDSPVPEAHLADPESPALLSELAPGALEGLLANPEGNIPNLARGPAGRSRGFLRGVTPAAADPLMTPGLAEVYETYGADETTTLGLQEETTVDSTATPDTQHTLMPRNKAQQPQIKHDAWHFQEP</sequence>
<feature type="signal peptide" evidence="3">
    <location>
        <begin position="1"/>
        <end position="26"/>
    </location>
</feature>
<feature type="chain" id="PRO_0000001191" description="Ameloblastin">
    <location>
        <begin position="27"/>
        <end position="392"/>
    </location>
</feature>
<feature type="region of interest" description="Disordered" evidence="4">
    <location>
        <begin position="86"/>
        <end position="109"/>
    </location>
</feature>
<feature type="region of interest" description="Disordered" evidence="4">
    <location>
        <begin position="247"/>
        <end position="280"/>
    </location>
</feature>
<feature type="region of interest" description="Disordered" evidence="4">
    <location>
        <begin position="349"/>
        <end position="392"/>
    </location>
</feature>
<feature type="compositionally biased region" description="Low complexity" evidence="4">
    <location>
        <begin position="97"/>
        <end position="109"/>
    </location>
</feature>
<feature type="compositionally biased region" description="Polar residues" evidence="4">
    <location>
        <begin position="359"/>
        <end position="381"/>
    </location>
</feature>
<feature type="compositionally biased region" description="Basic and acidic residues" evidence="4">
    <location>
        <begin position="382"/>
        <end position="392"/>
    </location>
</feature>
<feature type="modified residue" description="Hydroxyproline" evidence="1">
    <location>
        <position position="37"/>
    </location>
</feature>
<feature type="modified residue" description="Phosphoserine" evidence="2">
    <location>
        <position position="43"/>
    </location>
</feature>
<evidence type="ECO:0000250" key="1"/>
<evidence type="ECO:0000250" key="2">
    <source>
        <dbReference type="UniProtKB" id="Q28989"/>
    </source>
</evidence>
<evidence type="ECO:0000255" key="3"/>
<evidence type="ECO:0000256" key="4">
    <source>
        <dbReference type="SAM" id="MobiDB-lite"/>
    </source>
</evidence>
<evidence type="ECO:0000305" key="5"/>
<gene>
    <name type="primary">AMBN</name>
</gene>
<protein>
    <recommendedName>
        <fullName>Ameloblastin</fullName>
    </recommendedName>
</protein>
<name>AMBN_BOVIN</name>
<comment type="function">
    <text evidence="1">Involved in the mineralization and structural organization of enamel.</text>
</comment>
<comment type="subcellular location">
    <subcellularLocation>
        <location evidence="1">Secreted</location>
        <location evidence="1">Extracellular space</location>
        <location evidence="1">Extracellular matrix</location>
    </subcellularLocation>
</comment>
<comment type="similarity">
    <text evidence="5">Belongs to the ameloblastin family.</text>
</comment>
<comment type="sequence caution" evidence="5">
    <conflict type="erroneous initiation">
        <sequence resource="EMBL-CDS" id="AAD39833"/>
    </conflict>
</comment>
<keyword id="KW-0091">Biomineralization</keyword>
<keyword id="KW-0272">Extracellular matrix</keyword>
<keyword id="KW-0379">Hydroxylation</keyword>
<keyword id="KW-0597">Phosphoprotein</keyword>
<keyword id="KW-1185">Reference proteome</keyword>
<keyword id="KW-0964">Secreted</keyword>
<keyword id="KW-0732">Signal</keyword>
<dbReference type="EMBL" id="AF157019">
    <property type="protein sequence ID" value="AAD39833.2"/>
    <property type="status" value="ALT_INIT"/>
    <property type="molecule type" value="mRNA"/>
</dbReference>
<dbReference type="RefSeq" id="NP_776413.1">
    <property type="nucleotide sequence ID" value="NM_173988.2"/>
</dbReference>
<dbReference type="FunCoup" id="Q9XSX7">
    <property type="interactions" value="40"/>
</dbReference>
<dbReference type="STRING" id="9913.ENSBTAP00000052338"/>
<dbReference type="PaxDb" id="9913-ENSBTAP00000052338"/>
<dbReference type="GeneID" id="280995"/>
<dbReference type="KEGG" id="bta:280995"/>
<dbReference type="CTD" id="258"/>
<dbReference type="eggNOG" id="ENOG502QWCP">
    <property type="taxonomic scope" value="Eukaryota"/>
</dbReference>
<dbReference type="HOGENOM" id="CLU_051782_0_0_1"/>
<dbReference type="InParanoid" id="Q9XSX7"/>
<dbReference type="OrthoDB" id="9908655at2759"/>
<dbReference type="TreeFam" id="TF337860"/>
<dbReference type="Proteomes" id="UP000009136">
    <property type="component" value="Unplaced"/>
</dbReference>
<dbReference type="GO" id="GO:0005576">
    <property type="term" value="C:extracellular region"/>
    <property type="evidence" value="ECO:0007669"/>
    <property type="project" value="UniProtKB-KW"/>
</dbReference>
<dbReference type="GO" id="GO:0008083">
    <property type="term" value="F:growth factor activity"/>
    <property type="evidence" value="ECO:0000318"/>
    <property type="project" value="GO_Central"/>
</dbReference>
<dbReference type="GO" id="GO:0030345">
    <property type="term" value="F:structural constituent of tooth enamel"/>
    <property type="evidence" value="ECO:0007669"/>
    <property type="project" value="InterPro"/>
</dbReference>
<dbReference type="GO" id="GO:0031214">
    <property type="term" value="P:biomineral tissue development"/>
    <property type="evidence" value="ECO:0007669"/>
    <property type="project" value="UniProtKB-KW"/>
</dbReference>
<dbReference type="GO" id="GO:0007155">
    <property type="term" value="P:cell adhesion"/>
    <property type="evidence" value="ECO:0000318"/>
    <property type="project" value="GO_Central"/>
</dbReference>
<dbReference type="GO" id="GO:0042475">
    <property type="term" value="P:odontogenesis of dentin-containing tooth"/>
    <property type="evidence" value="ECO:0007669"/>
    <property type="project" value="InterPro"/>
</dbReference>
<dbReference type="InterPro" id="IPR007798">
    <property type="entry name" value="Amelin"/>
</dbReference>
<dbReference type="PANTHER" id="PTHR14115">
    <property type="entry name" value="AMELOBLASTIN"/>
    <property type="match status" value="1"/>
</dbReference>
<dbReference type="PANTHER" id="PTHR14115:SF0">
    <property type="entry name" value="AMELOBLASTIN"/>
    <property type="match status" value="1"/>
</dbReference>
<dbReference type="Pfam" id="PF05111">
    <property type="entry name" value="Amelin"/>
    <property type="match status" value="1"/>
</dbReference>
<dbReference type="SMART" id="SM00817">
    <property type="entry name" value="Amelin"/>
    <property type="match status" value="1"/>
</dbReference>
<accession>Q9XSX7</accession>